<accession>Q8MJ24</accession>
<organism>
    <name type="scientific">Bos taurus</name>
    <name type="common">Bovine</name>
    <dbReference type="NCBI Taxonomy" id="9913"/>
    <lineage>
        <taxon>Eukaryota</taxon>
        <taxon>Metazoa</taxon>
        <taxon>Chordata</taxon>
        <taxon>Craniata</taxon>
        <taxon>Vertebrata</taxon>
        <taxon>Euteleostomi</taxon>
        <taxon>Mammalia</taxon>
        <taxon>Eutheria</taxon>
        <taxon>Laurasiatheria</taxon>
        <taxon>Artiodactyla</taxon>
        <taxon>Ruminantia</taxon>
        <taxon>Pecora</taxon>
        <taxon>Bovidae</taxon>
        <taxon>Bovinae</taxon>
        <taxon>Bos</taxon>
    </lineage>
</organism>
<sequence>MWFLPAALPLLPLLLLLGQAPPSRPQSLGTMKLRLVGPGSGPEEGRLEVLHQGQWGTVCDDDFALQEATVACRQLGFEGALTWAHSAKYGSGEGPIWLDNVHCVGTESSLDQCGSNGWGVSDCTHSEDVGVVCNPQRHRGSVSERVSNALGPQDRRLEEVRLKPILASAKRQSPVTEGAVEVKYEGHWRQVCDQGWTRNNSRVVCGMLGFPSEAPVDSHHYRKVWDSKMKDPNSRLKSLTKKNSFWIHRVNCLGTEPHMANCQVQVAPAQGKLRPACPGGMHAVVSCVAGPRFRPPKAKPGRKESRAEEMKVRLRSGAQVGEGRVEVLMNRQWGTVCDHGWNLISASVVCRQLGFGSAREALFGAQLGQALGPIHLSEVRCRGYERTLSDCPSLEGSQNGCQHDNDAAVRCNIPNMGFQDQVRLAGGRSPEEGVVEVQVEVNGVQRWGAVCSDHWGLSEAMVACRQLGLGFASHAIKDTWYWQGTPGAREVVMSGVHCSGTELALQQCQRHGPVHCSHGTGRFSAGVSCTDSAPDLVMNAQLVQETAYLEDRPLSLLYCAHEENCLSQSADRMDWPYGHRRLLRFSSQIHNLGRADFRPKMGRHGWIWHQCHRHYHSIEVFTHYDLLTLNGSKVAEGHKASFCLEDTNCPTGMQRRYACANFGEQGVTVGCWDTYRHDIDCQWVDITDVGPGDYIFQVVVNPKFEVAESDFSNNMMRCRCKYDGQRVWLHNCHTGDSYRANTELSQEQEQRLRNNLI</sequence>
<feature type="signal peptide" evidence="5">
    <location>
        <begin position="1"/>
        <end position="25"/>
    </location>
</feature>
<feature type="chain" id="PRO_0000045441" description="Lysyl oxidase homolog 4">
    <location>
        <begin position="26"/>
        <end position="757"/>
    </location>
</feature>
<feature type="domain" description="SRCR 1" evidence="6">
    <location>
        <begin position="33"/>
        <end position="134"/>
    </location>
</feature>
<feature type="domain" description="SRCR 2" evidence="6">
    <location>
        <begin position="160"/>
        <end position="288"/>
    </location>
</feature>
<feature type="domain" description="SRCR 3" evidence="6">
    <location>
        <begin position="312"/>
        <end position="412"/>
    </location>
</feature>
<feature type="domain" description="SRCR 4" evidence="6">
    <location>
        <begin position="422"/>
        <end position="530"/>
    </location>
</feature>
<feature type="region of interest" description="Lysyl-oxidase like" evidence="1">
    <location>
        <begin position="534"/>
        <end position="737"/>
    </location>
</feature>
<feature type="binding site" evidence="5">
    <location>
        <position position="612"/>
    </location>
    <ligand>
        <name>Cu cation</name>
        <dbReference type="ChEBI" id="CHEBI:23378"/>
    </ligand>
</feature>
<feature type="binding site" evidence="5">
    <location>
        <position position="614"/>
    </location>
    <ligand>
        <name>Cu cation</name>
        <dbReference type="ChEBI" id="CHEBI:23378"/>
    </ligand>
</feature>
<feature type="binding site" evidence="5">
    <location>
        <position position="616"/>
    </location>
    <ligand>
        <name>Cu cation</name>
        <dbReference type="ChEBI" id="CHEBI:23378"/>
    </ligand>
</feature>
<feature type="site" description="Cleavage; by BMP1" evidence="4">
    <location>
        <begin position="570"/>
        <end position="571"/>
    </location>
</feature>
<feature type="modified residue" description="2',4',5'-topaquinone" evidence="3">
    <location>
        <position position="675"/>
    </location>
</feature>
<feature type="glycosylation site" description="N-linked (GlcNAc...) asparagine" evidence="5">
    <location>
        <position position="199"/>
    </location>
</feature>
<feature type="glycosylation site" description="N-linked (GlcNAc...) asparagine" evidence="5">
    <location>
        <position position="630"/>
    </location>
</feature>
<feature type="disulfide bond" evidence="6">
    <location>
        <begin position="59"/>
        <end position="123"/>
    </location>
</feature>
<feature type="disulfide bond" evidence="6">
    <location>
        <begin position="72"/>
        <end position="133"/>
    </location>
</feature>
<feature type="disulfide bond" evidence="6">
    <location>
        <begin position="103"/>
        <end position="113"/>
    </location>
</feature>
<feature type="disulfide bond" evidence="6">
    <location>
        <begin position="192"/>
        <end position="277"/>
    </location>
</feature>
<feature type="disulfide bond" evidence="6">
    <location>
        <begin position="205"/>
        <end position="287"/>
    </location>
</feature>
<feature type="disulfide bond" evidence="6">
    <location>
        <begin position="252"/>
        <end position="262"/>
    </location>
</feature>
<feature type="disulfide bond" evidence="6">
    <location>
        <begin position="337"/>
        <end position="401"/>
    </location>
</feature>
<feature type="disulfide bond" evidence="6">
    <location>
        <begin position="350"/>
        <end position="411"/>
    </location>
</feature>
<feature type="disulfide bond" evidence="6">
    <location>
        <begin position="381"/>
        <end position="391"/>
    </location>
</feature>
<feature type="disulfide bond" evidence="6">
    <location>
        <begin position="451"/>
        <end position="516"/>
    </location>
</feature>
<feature type="disulfide bond" evidence="6">
    <location>
        <begin position="464"/>
        <end position="529"/>
    </location>
</feature>
<feature type="disulfide bond" evidence="6">
    <location>
        <begin position="498"/>
        <end position="508"/>
    </location>
</feature>
<feature type="disulfide bond" evidence="6">
    <location>
        <begin position="559"/>
        <end position="565"/>
    </location>
</feature>
<feature type="disulfide bond" evidence="6">
    <location>
        <begin position="611"/>
        <end position="659"/>
    </location>
</feature>
<feature type="disulfide bond" evidence="6">
    <location>
        <begin position="643"/>
        <end position="649"/>
    </location>
</feature>
<feature type="disulfide bond" evidence="6">
    <location>
        <begin position="671"/>
        <end position="681"/>
    </location>
</feature>
<feature type="disulfide bond" evidence="6">
    <location>
        <begin position="718"/>
        <end position="732"/>
    </location>
</feature>
<feature type="cross-link" description="Lysine tyrosylquinone (Lys-Tyr)" evidence="3">
    <location>
        <begin position="639"/>
        <end position="675"/>
    </location>
</feature>
<evidence type="ECO:0000250" key="1"/>
<evidence type="ECO:0000250" key="2">
    <source>
        <dbReference type="UniProtKB" id="P16636"/>
    </source>
</evidence>
<evidence type="ECO:0000250" key="3">
    <source>
        <dbReference type="UniProtKB" id="P33072"/>
    </source>
</evidence>
<evidence type="ECO:0000250" key="4">
    <source>
        <dbReference type="UniProtKB" id="Q96JB6"/>
    </source>
</evidence>
<evidence type="ECO:0000255" key="5"/>
<evidence type="ECO:0000255" key="6">
    <source>
        <dbReference type="PROSITE-ProRule" id="PRU00196"/>
    </source>
</evidence>
<evidence type="ECO:0000305" key="7"/>
<name>LOXL4_BOVIN</name>
<gene>
    <name type="primary">LOXL4</name>
</gene>
<proteinExistence type="evidence at transcript level"/>
<comment type="function">
    <text evidence="4">Catalyzes the oxidative deamination of lysine and hydroxylysine residues in collagen and elastin, resulting in the formation of covalent cross-linkages, and the stabilization of collagen and elastin fibers.</text>
</comment>
<comment type="catalytic activity">
    <reaction evidence="4">
        <text>L-lysyl-[protein] + O2 + H2O = (S)-2-amino-6-oxohexanoyl-[protein] + H2O2 + NH4(+)</text>
        <dbReference type="Rhea" id="RHEA:24544"/>
        <dbReference type="Rhea" id="RHEA-COMP:9752"/>
        <dbReference type="Rhea" id="RHEA-COMP:12448"/>
        <dbReference type="ChEBI" id="CHEBI:15377"/>
        <dbReference type="ChEBI" id="CHEBI:15379"/>
        <dbReference type="ChEBI" id="CHEBI:16240"/>
        <dbReference type="ChEBI" id="CHEBI:28938"/>
        <dbReference type="ChEBI" id="CHEBI:29969"/>
        <dbReference type="ChEBI" id="CHEBI:131803"/>
        <dbReference type="EC" id="1.4.3.13"/>
    </reaction>
</comment>
<comment type="cofactor">
    <cofactor evidence="2">
        <name>Cu cation</name>
        <dbReference type="ChEBI" id="CHEBI:23378"/>
    </cofactor>
</comment>
<comment type="cofactor">
    <cofactor evidence="3">
        <name>lysine tyrosylquinone residue</name>
        <dbReference type="ChEBI" id="CHEBI:20489"/>
    </cofactor>
    <text evidence="3">Contains 1 lysine tyrosylquinone.</text>
</comment>
<comment type="subcellular location">
    <subcellularLocation>
        <location evidence="7">Secreted</location>
        <location evidence="7">Extracellular space</location>
    </subcellularLocation>
</comment>
<comment type="PTM">
    <text evidence="3">The lysine tyrosylquinone cross-link (LTQ) is generated by condensation of the epsilon-amino group of a lysine with a topaquinone produced by oxidation of tyrosine.</text>
</comment>
<comment type="PTM">
    <text evidence="4">May be proteolytically cleaved by BMP1.</text>
</comment>
<comment type="similarity">
    <text evidence="7">Belongs to the lysyl oxidase family.</text>
</comment>
<reference key="1">
    <citation type="submission" date="2002-07" db="EMBL/GenBank/DDBJ databases">
        <title>The investigation of the lysyl oxidase related gene in the bovine growth plate cartilage.</title>
        <authorList>
            <person name="Tepsiri N."/>
            <person name="Grant M.E."/>
            <person name="Boot-Handford R.P."/>
            <person name="Wallis G.A."/>
        </authorList>
    </citation>
    <scope>NUCLEOTIDE SEQUENCE [MRNA]</scope>
</reference>
<protein>
    <recommendedName>
        <fullName>Lysyl oxidase homolog 4</fullName>
        <ecNumber evidence="4">1.4.3.13</ecNumber>
    </recommendedName>
    <alternativeName>
        <fullName>Lysyl oxidase-like protein 4</fullName>
    </alternativeName>
</protein>
<keyword id="KW-0186">Copper</keyword>
<keyword id="KW-1015">Disulfide bond</keyword>
<keyword id="KW-0325">Glycoprotein</keyword>
<keyword id="KW-0886">LTQ</keyword>
<keyword id="KW-0479">Metal-binding</keyword>
<keyword id="KW-0560">Oxidoreductase</keyword>
<keyword id="KW-1185">Reference proteome</keyword>
<keyword id="KW-0677">Repeat</keyword>
<keyword id="KW-0964">Secreted</keyword>
<keyword id="KW-0732">Signal</keyword>
<keyword id="KW-0801">TPQ</keyword>
<dbReference type="EC" id="1.4.3.13" evidence="4"/>
<dbReference type="EMBL" id="AF529202">
    <property type="protein sequence ID" value="AAM94335.1"/>
    <property type="molecule type" value="mRNA"/>
</dbReference>
<dbReference type="RefSeq" id="NP_776809.1">
    <property type="nucleotide sequence ID" value="NM_174384.3"/>
</dbReference>
<dbReference type="SMR" id="Q8MJ24"/>
<dbReference type="FunCoup" id="Q8MJ24">
    <property type="interactions" value="117"/>
</dbReference>
<dbReference type="STRING" id="9913.ENSBTAP00000027838"/>
<dbReference type="GlyCosmos" id="Q8MJ24">
    <property type="glycosylation" value="2 sites, No reported glycans"/>
</dbReference>
<dbReference type="GlyGen" id="Q8MJ24">
    <property type="glycosylation" value="2 sites"/>
</dbReference>
<dbReference type="PaxDb" id="9913-ENSBTAP00000027838"/>
<dbReference type="GeneID" id="281904"/>
<dbReference type="KEGG" id="bta:281904"/>
<dbReference type="CTD" id="84171"/>
<dbReference type="eggNOG" id="ENOG502QSX8">
    <property type="taxonomic scope" value="Eukaryota"/>
</dbReference>
<dbReference type="HOGENOM" id="CLU_002555_3_0_1"/>
<dbReference type="InParanoid" id="Q8MJ24"/>
<dbReference type="OrthoDB" id="547291at2759"/>
<dbReference type="Proteomes" id="UP000009136">
    <property type="component" value="Unplaced"/>
</dbReference>
<dbReference type="GO" id="GO:0062023">
    <property type="term" value="C:collagen-containing extracellular matrix"/>
    <property type="evidence" value="ECO:0000318"/>
    <property type="project" value="GO_Central"/>
</dbReference>
<dbReference type="GO" id="GO:0005615">
    <property type="term" value="C:extracellular space"/>
    <property type="evidence" value="ECO:0000318"/>
    <property type="project" value="GO_Central"/>
</dbReference>
<dbReference type="GO" id="GO:0016020">
    <property type="term" value="C:membrane"/>
    <property type="evidence" value="ECO:0007669"/>
    <property type="project" value="InterPro"/>
</dbReference>
<dbReference type="GO" id="GO:0005507">
    <property type="term" value="F:copper ion binding"/>
    <property type="evidence" value="ECO:0007669"/>
    <property type="project" value="InterPro"/>
</dbReference>
<dbReference type="GO" id="GO:0004720">
    <property type="term" value="F:protein-lysine 6-oxidase activity"/>
    <property type="evidence" value="ECO:0000250"/>
    <property type="project" value="UniProtKB"/>
</dbReference>
<dbReference type="GO" id="GO:0030199">
    <property type="term" value="P:collagen fibril organization"/>
    <property type="evidence" value="ECO:0000318"/>
    <property type="project" value="GO_Central"/>
</dbReference>
<dbReference type="FunFam" id="3.10.250.10:FF:000001">
    <property type="entry name" value="Lysyl oxidase 4 isoform X1"/>
    <property type="match status" value="2"/>
</dbReference>
<dbReference type="FunFam" id="3.10.250.10:FF:000008">
    <property type="entry name" value="Lysyl oxidase homolog 2"/>
    <property type="match status" value="1"/>
</dbReference>
<dbReference type="FunFam" id="3.10.250.10:FF:000023">
    <property type="entry name" value="lysyl oxidase homolog 4"/>
    <property type="match status" value="1"/>
</dbReference>
<dbReference type="Gene3D" id="3.10.250.10">
    <property type="entry name" value="SRCR-like domain"/>
    <property type="match status" value="4"/>
</dbReference>
<dbReference type="InterPro" id="IPR050912">
    <property type="entry name" value="LOX-like_protein"/>
</dbReference>
<dbReference type="InterPro" id="IPR001695">
    <property type="entry name" value="Lysyl_oxidase"/>
</dbReference>
<dbReference type="InterPro" id="IPR019828">
    <property type="entry name" value="Lysyl_oxidase_CS"/>
</dbReference>
<dbReference type="InterPro" id="IPR001190">
    <property type="entry name" value="SRCR"/>
</dbReference>
<dbReference type="InterPro" id="IPR036772">
    <property type="entry name" value="SRCR-like_dom_sf"/>
</dbReference>
<dbReference type="PANTHER" id="PTHR45817:SF5">
    <property type="entry name" value="LYSYL OXIDASE HOMOLOG 4"/>
    <property type="match status" value="1"/>
</dbReference>
<dbReference type="PANTHER" id="PTHR45817">
    <property type="entry name" value="LYSYL OXIDASE-LIKE-RELATED"/>
    <property type="match status" value="1"/>
</dbReference>
<dbReference type="Pfam" id="PF01186">
    <property type="entry name" value="Lysyl_oxidase"/>
    <property type="match status" value="1"/>
</dbReference>
<dbReference type="Pfam" id="PF00530">
    <property type="entry name" value="SRCR"/>
    <property type="match status" value="4"/>
</dbReference>
<dbReference type="PRINTS" id="PR00074">
    <property type="entry name" value="LYSYLOXIDASE"/>
</dbReference>
<dbReference type="PRINTS" id="PR00258">
    <property type="entry name" value="SPERACTRCPTR"/>
</dbReference>
<dbReference type="SMART" id="SM00202">
    <property type="entry name" value="SR"/>
    <property type="match status" value="4"/>
</dbReference>
<dbReference type="SUPFAM" id="SSF56487">
    <property type="entry name" value="SRCR-like"/>
    <property type="match status" value="4"/>
</dbReference>
<dbReference type="PROSITE" id="PS00926">
    <property type="entry name" value="LYSYL_OXIDASE"/>
    <property type="match status" value="1"/>
</dbReference>
<dbReference type="PROSITE" id="PS00420">
    <property type="entry name" value="SRCR_1"/>
    <property type="match status" value="2"/>
</dbReference>
<dbReference type="PROSITE" id="PS50287">
    <property type="entry name" value="SRCR_2"/>
    <property type="match status" value="4"/>
</dbReference>